<organism>
    <name type="scientific">Rhizobium radiobacter</name>
    <name type="common">Agrobacterium tumefaciens</name>
    <name type="synonym">Agrobacterium radiobacter</name>
    <dbReference type="NCBI Taxonomy" id="358"/>
    <lineage>
        <taxon>Bacteria</taxon>
        <taxon>Pseudomonadati</taxon>
        <taxon>Pseudomonadota</taxon>
        <taxon>Alphaproteobacteria</taxon>
        <taxon>Hyphomicrobiales</taxon>
        <taxon>Rhizobiaceae</taxon>
        <taxon>Rhizobium/Agrobacterium group</taxon>
        <taxon>Agrobacterium</taxon>
        <taxon>Agrobacterium tumefaciens complex</taxon>
    </lineage>
</organism>
<reference key="1">
    <citation type="submission" date="1997-11" db="EMBL/GenBank/DDBJ databases">
        <authorList>
            <person name="Zhu J."/>
            <person name="Winans S.C."/>
        </authorList>
    </citation>
    <scope>NUCLEOTIDE SEQUENCE [GENOMIC DNA]</scope>
    <source>
        <strain>A6NC</strain>
    </source>
</reference>
<sequence length="175" mass="18821">MSAGALNSAGAVMHSTRLRTNEVAVALPEEGDASLFFVGKIRTPWKSRSDTPRQGSELGPLCTLEISEPWAVALKGVEAYSRLEILYWLHESPRDIVLLSPADDGEIHGAFSLRAPVRPNPIGTSIVKVERVSGNSIVVRGLDCLDGTPLLDIKPDRSLSKPLAPVRKSFSIPAA</sequence>
<protein>
    <recommendedName>
        <fullName>Probable S-adenosyl-L-methionine-binding protein VirR</fullName>
    </recommendedName>
    <alternativeName>
        <fullName>Protein VirR</fullName>
    </alternativeName>
</protein>
<dbReference type="EMBL" id="AF242881">
    <property type="protein sequence ID" value="AAB91563.1"/>
    <property type="molecule type" value="Genomic_DNA"/>
</dbReference>
<dbReference type="RefSeq" id="NP_059828.1">
    <property type="nucleotide sequence ID" value="NC_002377.1"/>
</dbReference>
<dbReference type="SMR" id="O52278"/>
<dbReference type="PATRIC" id="fig|358.67.peg.5535"/>
<dbReference type="CDD" id="cd09281">
    <property type="entry name" value="UPF0066"/>
    <property type="match status" value="1"/>
</dbReference>
<dbReference type="Gene3D" id="2.40.30.70">
    <property type="entry name" value="YaeB-like"/>
    <property type="match status" value="1"/>
</dbReference>
<dbReference type="InterPro" id="IPR023370">
    <property type="entry name" value="TrmO-like_N"/>
</dbReference>
<dbReference type="InterPro" id="IPR023368">
    <property type="entry name" value="UPF0066_cons_site"/>
</dbReference>
<dbReference type="InterPro" id="IPR040372">
    <property type="entry name" value="YaeB-like"/>
</dbReference>
<dbReference type="InterPro" id="IPR036413">
    <property type="entry name" value="YaeB-like_sf"/>
</dbReference>
<dbReference type="InterPro" id="IPR036414">
    <property type="entry name" value="YaeB_N_sf"/>
</dbReference>
<dbReference type="NCBIfam" id="TIGR00104">
    <property type="entry name" value="tRNA_TsaA"/>
    <property type="match status" value="1"/>
</dbReference>
<dbReference type="PANTHER" id="PTHR12818">
    <property type="entry name" value="TRNA (ADENINE(37)-N6)-METHYLTRANSFERASE"/>
    <property type="match status" value="1"/>
</dbReference>
<dbReference type="PANTHER" id="PTHR12818:SF0">
    <property type="entry name" value="TRNA (ADENINE(37)-N6)-METHYLTRANSFERASE"/>
    <property type="match status" value="1"/>
</dbReference>
<dbReference type="Pfam" id="PF01980">
    <property type="entry name" value="TrmO_N"/>
    <property type="match status" value="1"/>
</dbReference>
<dbReference type="SUPFAM" id="SSF118196">
    <property type="entry name" value="YaeB-like"/>
    <property type="match status" value="1"/>
</dbReference>
<dbReference type="PROSITE" id="PS01318">
    <property type="entry name" value="TSAA_1"/>
    <property type="match status" value="1"/>
</dbReference>
<dbReference type="PROSITE" id="PS51668">
    <property type="entry name" value="TSAA_2"/>
    <property type="match status" value="1"/>
</dbReference>
<geneLocation type="plasmid">
    <name>pTiA6NC</name>
</geneLocation>
<proteinExistence type="inferred from homology"/>
<evidence type="ECO:0000250" key="1">
    <source>
        <dbReference type="UniProtKB" id="Q6NDF6"/>
    </source>
</evidence>
<evidence type="ECO:0000255" key="2">
    <source>
        <dbReference type="PROSITE-ProRule" id="PRU01003"/>
    </source>
</evidence>
<evidence type="ECO:0000305" key="3"/>
<gene>
    <name type="primary">virR</name>
</gene>
<accession>O52278</accession>
<keyword id="KW-0614">Plasmid</keyword>
<keyword id="KW-0949">S-adenosyl-L-methionine</keyword>
<feature type="chain" id="PRO_0000155616" description="Probable S-adenosyl-L-methionine-binding protein VirR">
    <location>
        <begin position="1"/>
        <end position="175"/>
    </location>
</feature>
<feature type="domain" description="TsaA-like" evidence="2">
    <location>
        <begin position="35"/>
        <end position="165"/>
    </location>
</feature>
<feature type="binding site" evidence="1">
    <location>
        <begin position="52"/>
        <end position="54"/>
    </location>
    <ligand>
        <name>S-adenosyl-L-methionine</name>
        <dbReference type="ChEBI" id="CHEBI:59789"/>
    </ligand>
</feature>
<feature type="binding site" evidence="1">
    <location>
        <begin position="90"/>
        <end position="91"/>
    </location>
    <ligand>
        <name>S-adenosyl-L-methionine</name>
        <dbReference type="ChEBI" id="CHEBI:59789"/>
    </ligand>
</feature>
<feature type="binding site" evidence="1">
    <location>
        <position position="114"/>
    </location>
    <ligand>
        <name>S-adenosyl-L-methionine</name>
        <dbReference type="ChEBI" id="CHEBI:59789"/>
    </ligand>
</feature>
<feature type="binding site" evidence="1">
    <location>
        <position position="124"/>
    </location>
    <ligand>
        <name>S-adenosyl-L-methionine</name>
        <dbReference type="ChEBI" id="CHEBI:59789"/>
    </ligand>
</feature>
<feature type="binding site" evidence="1">
    <location>
        <begin position="145"/>
        <end position="148"/>
    </location>
    <ligand>
        <name>S-adenosyl-L-methionine</name>
        <dbReference type="ChEBI" id="CHEBI:59789"/>
    </ligand>
</feature>
<name>VIRR_RHIRD</name>
<comment type="similarity">
    <text evidence="3">Belongs to the tRNA methyltransferase O family.</text>
</comment>